<gene>
    <name type="primary">NDH2</name>
    <name type="ordered locus">YALI0F25135g</name>
</gene>
<dbReference type="EC" id="1.6.5.9"/>
<dbReference type="EMBL" id="AJ006852">
    <property type="protein sequence ID" value="CAA07265.1"/>
    <property type="molecule type" value="Genomic_DNA"/>
</dbReference>
<dbReference type="EMBL" id="CR382132">
    <property type="protein sequence ID" value="CAG78667.1"/>
    <property type="molecule type" value="Genomic_DNA"/>
</dbReference>
<dbReference type="RefSeq" id="XP_505856.1">
    <property type="nucleotide sequence ID" value="XM_505856.1"/>
</dbReference>
<dbReference type="SMR" id="F2Z699"/>
<dbReference type="FunCoup" id="F2Z699">
    <property type="interactions" value="328"/>
</dbReference>
<dbReference type="STRING" id="284591.F2Z699"/>
<dbReference type="EnsemblFungi" id="CAG78667">
    <property type="protein sequence ID" value="CAG78667"/>
    <property type="gene ID" value="YALI0_F25135g"/>
</dbReference>
<dbReference type="KEGG" id="yli:2908423"/>
<dbReference type="VEuPathDB" id="FungiDB:YALI0_F25135g"/>
<dbReference type="HOGENOM" id="CLU_021377_1_0_1"/>
<dbReference type="InParanoid" id="F2Z699"/>
<dbReference type="OMA" id="QIPAQKD"/>
<dbReference type="OrthoDB" id="611at4891"/>
<dbReference type="BRENDA" id="1.6.5.9">
    <property type="organism ID" value="1122"/>
</dbReference>
<dbReference type="Proteomes" id="UP000001300">
    <property type="component" value="Chromosome F"/>
</dbReference>
<dbReference type="GO" id="GO:0005743">
    <property type="term" value="C:mitochondrial inner membrane"/>
    <property type="evidence" value="ECO:0007669"/>
    <property type="project" value="UniProtKB-SubCell"/>
</dbReference>
<dbReference type="GO" id="GO:0005739">
    <property type="term" value="C:mitochondrion"/>
    <property type="evidence" value="ECO:0000318"/>
    <property type="project" value="GO_Central"/>
</dbReference>
<dbReference type="GO" id="GO:0050136">
    <property type="term" value="F:NADH:ubiquinone reductase (non-electrogenic) activity"/>
    <property type="evidence" value="ECO:0007669"/>
    <property type="project" value="UniProtKB-EC"/>
</dbReference>
<dbReference type="GO" id="GO:0016491">
    <property type="term" value="F:oxidoreductase activity"/>
    <property type="evidence" value="ECO:0000318"/>
    <property type="project" value="GO_Central"/>
</dbReference>
<dbReference type="Gene3D" id="3.50.50.100">
    <property type="match status" value="1"/>
</dbReference>
<dbReference type="InterPro" id="IPR036188">
    <property type="entry name" value="FAD/NAD-bd_sf"/>
</dbReference>
<dbReference type="InterPro" id="IPR023753">
    <property type="entry name" value="FAD/NAD-binding_dom"/>
</dbReference>
<dbReference type="InterPro" id="IPR045024">
    <property type="entry name" value="NDH-2"/>
</dbReference>
<dbReference type="InterPro" id="IPR054585">
    <property type="entry name" value="NDH2-like_C"/>
</dbReference>
<dbReference type="PANTHER" id="PTHR43706:SF47">
    <property type="entry name" value="EXTERNAL NADH-UBIQUINONE OXIDOREDUCTASE 1, MITOCHONDRIAL-RELATED"/>
    <property type="match status" value="1"/>
</dbReference>
<dbReference type="PANTHER" id="PTHR43706">
    <property type="entry name" value="NADH DEHYDROGENASE"/>
    <property type="match status" value="1"/>
</dbReference>
<dbReference type="Pfam" id="PF22366">
    <property type="entry name" value="NDH2_C"/>
    <property type="match status" value="1"/>
</dbReference>
<dbReference type="Pfam" id="PF07992">
    <property type="entry name" value="Pyr_redox_2"/>
    <property type="match status" value="1"/>
</dbReference>
<dbReference type="PRINTS" id="PR00368">
    <property type="entry name" value="FADPNR"/>
</dbReference>
<dbReference type="SUPFAM" id="SSF51905">
    <property type="entry name" value="FAD/NAD(P)-binding domain"/>
    <property type="match status" value="2"/>
</dbReference>
<comment type="function">
    <text evidence="4">Alternative NADH-ubiquinone oxidoreductase which catalyzes the oxidation of mitochondrial NADH does not translocate protons across the inner mitochondrial membrane.</text>
</comment>
<comment type="catalytic activity">
    <reaction evidence="4">
        <text>a quinone + NADH + H(+) = a quinol + NAD(+)</text>
        <dbReference type="Rhea" id="RHEA:46160"/>
        <dbReference type="ChEBI" id="CHEBI:15378"/>
        <dbReference type="ChEBI" id="CHEBI:24646"/>
        <dbReference type="ChEBI" id="CHEBI:57540"/>
        <dbReference type="ChEBI" id="CHEBI:57945"/>
        <dbReference type="ChEBI" id="CHEBI:132124"/>
        <dbReference type="EC" id="1.6.5.9"/>
    </reaction>
</comment>
<comment type="catalytic activity">
    <reaction evidence="4">
        <text>a ubiquinone + NADH + H(+) = a ubiquinol + NAD(+)</text>
        <dbReference type="Rhea" id="RHEA:23152"/>
        <dbReference type="Rhea" id="RHEA-COMP:9565"/>
        <dbReference type="Rhea" id="RHEA-COMP:9566"/>
        <dbReference type="ChEBI" id="CHEBI:15378"/>
        <dbReference type="ChEBI" id="CHEBI:16389"/>
        <dbReference type="ChEBI" id="CHEBI:17976"/>
        <dbReference type="ChEBI" id="CHEBI:57540"/>
        <dbReference type="ChEBI" id="CHEBI:57945"/>
    </reaction>
</comment>
<comment type="cofactor">
    <cofactor evidence="1">
        <name>FAD</name>
        <dbReference type="ChEBI" id="CHEBI:57692"/>
    </cofactor>
    <text evidence="1">Binds 1 FAD per subunit.</text>
</comment>
<comment type="biophysicochemical properties">
    <kinetics>
        <KM evidence="4">14 uM for NADH</KM>
    </kinetics>
</comment>
<comment type="subcellular location">
    <subcellularLocation>
        <location evidence="4">Mitochondrion inner membrane</location>
        <topology evidence="4">Peripheral membrane protein</topology>
        <orientation evidence="4">Intermembrane side</orientation>
    </subcellularLocation>
</comment>
<comment type="similarity">
    <text evidence="5">Belongs to the NADH dehydrogenase family.</text>
</comment>
<organism>
    <name type="scientific">Yarrowia lipolytica (strain CLIB 122 / E 150)</name>
    <name type="common">Yeast</name>
    <name type="synonym">Candida lipolytica</name>
    <dbReference type="NCBI Taxonomy" id="284591"/>
    <lineage>
        <taxon>Eukaryota</taxon>
        <taxon>Fungi</taxon>
        <taxon>Dikarya</taxon>
        <taxon>Ascomycota</taxon>
        <taxon>Saccharomycotina</taxon>
        <taxon>Dipodascomycetes</taxon>
        <taxon>Dipodascales</taxon>
        <taxon>Dipodascales incertae sedis</taxon>
        <taxon>Yarrowia</taxon>
    </lineage>
</organism>
<reference key="1">
    <citation type="journal article" date="1999" name="J. Cell Sci.">
        <title>A single external enzyme confers alternative NADH:ubiquinone oxidoreductase activity in Yarrowia lipolytica.</title>
        <authorList>
            <person name="Kerscher S.J."/>
            <person name="Okun J.G."/>
            <person name="Brandt U."/>
        </authorList>
    </citation>
    <scope>NUCLEOTIDE SEQUENCE [GENOMIC DNA]</scope>
    <scope>FUNCTION</scope>
    <scope>CATALYTIC ACTIVITY</scope>
    <scope>BIOPHYSICOCHEMICAL PROPERTIES</scope>
    <scope>SUBCELLULAR LOCATION</scope>
    <source>
        <strain>CLIB 122 / E 150</strain>
    </source>
</reference>
<reference key="2">
    <citation type="journal article" date="2004" name="Nature">
        <title>Genome evolution in yeasts.</title>
        <authorList>
            <person name="Dujon B."/>
            <person name="Sherman D."/>
            <person name="Fischer G."/>
            <person name="Durrens P."/>
            <person name="Casaregola S."/>
            <person name="Lafontaine I."/>
            <person name="de Montigny J."/>
            <person name="Marck C."/>
            <person name="Neuveglise C."/>
            <person name="Talla E."/>
            <person name="Goffard N."/>
            <person name="Frangeul L."/>
            <person name="Aigle M."/>
            <person name="Anthouard V."/>
            <person name="Babour A."/>
            <person name="Barbe V."/>
            <person name="Barnay S."/>
            <person name="Blanchin S."/>
            <person name="Beckerich J.-M."/>
            <person name="Beyne E."/>
            <person name="Bleykasten C."/>
            <person name="Boisrame A."/>
            <person name="Boyer J."/>
            <person name="Cattolico L."/>
            <person name="Confanioleri F."/>
            <person name="de Daruvar A."/>
            <person name="Despons L."/>
            <person name="Fabre E."/>
            <person name="Fairhead C."/>
            <person name="Ferry-Dumazet H."/>
            <person name="Groppi A."/>
            <person name="Hantraye F."/>
            <person name="Hennequin C."/>
            <person name="Jauniaux N."/>
            <person name="Joyet P."/>
            <person name="Kachouri R."/>
            <person name="Kerrest A."/>
            <person name="Koszul R."/>
            <person name="Lemaire M."/>
            <person name="Lesur I."/>
            <person name="Ma L."/>
            <person name="Muller H."/>
            <person name="Nicaud J.-M."/>
            <person name="Nikolski M."/>
            <person name="Oztas S."/>
            <person name="Ozier-Kalogeropoulos O."/>
            <person name="Pellenz S."/>
            <person name="Potier S."/>
            <person name="Richard G.-F."/>
            <person name="Straub M.-L."/>
            <person name="Suleau A."/>
            <person name="Swennen D."/>
            <person name="Tekaia F."/>
            <person name="Wesolowski-Louvel M."/>
            <person name="Westhof E."/>
            <person name="Wirth B."/>
            <person name="Zeniou-Meyer M."/>
            <person name="Zivanovic Y."/>
            <person name="Bolotin-Fukuhara M."/>
            <person name="Thierry A."/>
            <person name="Bouchier C."/>
            <person name="Caudron B."/>
            <person name="Scarpelli C."/>
            <person name="Gaillardin C."/>
            <person name="Weissenbach J."/>
            <person name="Wincker P."/>
            <person name="Souciet J.-L."/>
        </authorList>
    </citation>
    <scope>NUCLEOTIDE SEQUENCE [LARGE SCALE GENOMIC DNA]</scope>
    <source>
        <strain>CLIB 122 / E 150</strain>
    </source>
</reference>
<evidence type="ECO:0000250" key="1"/>
<evidence type="ECO:0000255" key="2"/>
<evidence type="ECO:0000256" key="3">
    <source>
        <dbReference type="SAM" id="MobiDB-lite"/>
    </source>
</evidence>
<evidence type="ECO:0000269" key="4">
    <source>
    </source>
</evidence>
<evidence type="ECO:0000305" key="5"/>
<accession>F2Z699</accession>
<accession>O74931</accession>
<accession>Q6C0F6</accession>
<keyword id="KW-0175">Coiled coil</keyword>
<keyword id="KW-0274">FAD</keyword>
<keyword id="KW-0285">Flavoprotein</keyword>
<keyword id="KW-0472">Membrane</keyword>
<keyword id="KW-0496">Mitochondrion</keyword>
<keyword id="KW-0999">Mitochondrion inner membrane</keyword>
<keyword id="KW-0520">NAD</keyword>
<keyword id="KW-0560">Oxidoreductase</keyword>
<keyword id="KW-1185">Reference proteome</keyword>
<keyword id="KW-0809">Transit peptide</keyword>
<feature type="transit peptide" description="Mitochondrion" evidence="2">
    <location>
        <begin position="1"/>
        <end position="30"/>
    </location>
</feature>
<feature type="chain" id="PRO_0000415492" description="External alternative NADH-ubiquinone oxidoreductase, mitochondrial">
    <location>
        <begin position="31"/>
        <end position="582"/>
    </location>
</feature>
<feature type="region of interest" description="Disordered" evidence="3">
    <location>
        <begin position="46"/>
        <end position="65"/>
    </location>
</feature>
<feature type="coiled-coil region" evidence="2">
    <location>
        <begin position="454"/>
        <end position="501"/>
    </location>
</feature>
<feature type="compositionally biased region" description="Basic and acidic residues" evidence="3">
    <location>
        <begin position="54"/>
        <end position="65"/>
    </location>
</feature>
<feature type="binding site" evidence="1">
    <location>
        <begin position="114"/>
        <end position="144"/>
    </location>
    <ligand>
        <name>FAD</name>
        <dbReference type="ChEBI" id="CHEBI:57692"/>
    </ligand>
</feature>
<feature type="binding site" evidence="1">
    <location>
        <begin position="277"/>
        <end position="313"/>
    </location>
    <ligand>
        <name>NAD(+)</name>
        <dbReference type="ChEBI" id="CHEBI:57540"/>
    </ligand>
</feature>
<protein>
    <recommendedName>
        <fullName>External alternative NADH-ubiquinone oxidoreductase, mitochondrial</fullName>
        <ecNumber>1.6.5.9</ecNumber>
    </recommendedName>
    <alternativeName>
        <fullName>External alternative NADH dehydrogenase</fullName>
    </alternativeName>
    <alternativeName>
        <fullName>NADH:ubiquinone reductase (non-electrogenic)</fullName>
    </alternativeName>
</protein>
<proteinExistence type="evidence at protein level"/>
<sequence length="582" mass="65815">MLRLRPAVRAVSVARSVALTRSLHVSVAKFNKIEGTAPAGLPKEVKQTAGHQGHHQEIPKPDENHPRRKKFHFWRSLWRLTYLSAIASLGYIGYRIYVIRNPSDQLPADPSKKTLVVLGSGWGSVSFLKKLDTSNYNVIVVSPRNYFLFTPLLPSCPTGTIEHRSIMEPIRGIIRHKQAECQYLEADATKIDHEKRIVTIRSAVSENSKEEVIKEIPFDYLVVGVGAMSSTFGIPGVQENACFLKEIPDAQQIRRTLMDCIEKAQFEKDPEVRKRLLHTVVVGGGPTGVEFAAELQDFFEDDLRKWIPDIRDDFKVTLVEALPNVLPSFSKKLIDYTEKTFSDEKISILTKTMVKSVDENVIRAEQTKGDGTKETLEMPYGTLVWATGNTVRPVVRELMSKIPAQKGSRRGLLVNEYLVVEGTEGIWALGDCSATKYAPTAQVASQEGSYLANLLNGIAKTEDLNNEITNLEKQSEHTFDEQERKNIFAQLESKSRKLRRSRAMLPFEYSHQGSLAYIGSDRAVADLSFNFWGIMNWSSGGTMTYYFWRSAYVSMCFSMRNKILVCIDWMKVRVFGRDISRE</sequence>
<name>NDH2_YARLI</name>